<comment type="function">
    <text evidence="1">Catalyzes the transfer of the diacylglyceryl group from phosphatidylglycerol to the sulfhydryl group of the N-terminal cysteine of a prolipoprotein, the first step in the formation of mature lipoproteins.</text>
</comment>
<comment type="catalytic activity">
    <reaction evidence="1">
        <text>L-cysteinyl-[prolipoprotein] + a 1,2-diacyl-sn-glycero-3-phospho-(1'-sn-glycerol) = an S-1,2-diacyl-sn-glyceryl-L-cysteinyl-[prolipoprotein] + sn-glycerol 1-phosphate + H(+)</text>
        <dbReference type="Rhea" id="RHEA:56712"/>
        <dbReference type="Rhea" id="RHEA-COMP:14679"/>
        <dbReference type="Rhea" id="RHEA-COMP:14680"/>
        <dbReference type="ChEBI" id="CHEBI:15378"/>
        <dbReference type="ChEBI" id="CHEBI:29950"/>
        <dbReference type="ChEBI" id="CHEBI:57685"/>
        <dbReference type="ChEBI" id="CHEBI:64716"/>
        <dbReference type="ChEBI" id="CHEBI:140658"/>
        <dbReference type="EC" id="2.5.1.145"/>
    </reaction>
</comment>
<comment type="pathway">
    <text evidence="1">Protein modification; lipoprotein biosynthesis (diacylglyceryl transfer).</text>
</comment>
<comment type="subcellular location">
    <subcellularLocation>
        <location evidence="1">Cell inner membrane</location>
        <topology evidence="1">Multi-pass membrane protein</topology>
    </subcellularLocation>
</comment>
<comment type="similarity">
    <text evidence="1">Belongs to the Lgt family.</text>
</comment>
<feature type="chain" id="PRO_1000053501" description="Phosphatidylglycerol--prolipoprotein diacylglyceryl transferase">
    <location>
        <begin position="1"/>
        <end position="290"/>
    </location>
</feature>
<feature type="transmembrane region" description="Helical" evidence="1">
    <location>
        <begin position="21"/>
        <end position="41"/>
    </location>
</feature>
<feature type="transmembrane region" description="Helical" evidence="1">
    <location>
        <begin position="60"/>
        <end position="80"/>
    </location>
</feature>
<feature type="transmembrane region" description="Helical" evidence="1">
    <location>
        <begin position="98"/>
        <end position="118"/>
    </location>
</feature>
<feature type="transmembrane region" description="Helical" evidence="1">
    <location>
        <begin position="124"/>
        <end position="144"/>
    </location>
</feature>
<feature type="transmembrane region" description="Helical" evidence="1">
    <location>
        <begin position="198"/>
        <end position="218"/>
    </location>
</feature>
<feature type="transmembrane region" description="Helical" evidence="1">
    <location>
        <begin position="224"/>
        <end position="244"/>
    </location>
</feature>
<feature type="transmembrane region" description="Helical" evidence="1">
    <location>
        <begin position="258"/>
        <end position="278"/>
    </location>
</feature>
<feature type="binding site" evidence="1">
    <location>
        <position position="143"/>
    </location>
    <ligand>
        <name>a 1,2-diacyl-sn-glycero-3-phospho-(1'-sn-glycerol)</name>
        <dbReference type="ChEBI" id="CHEBI:64716"/>
    </ligand>
</feature>
<name>LGT_SODGM</name>
<evidence type="ECO:0000255" key="1">
    <source>
        <dbReference type="HAMAP-Rule" id="MF_01147"/>
    </source>
</evidence>
<organism>
    <name type="scientific">Sodalis glossinidius (strain morsitans)</name>
    <dbReference type="NCBI Taxonomy" id="343509"/>
    <lineage>
        <taxon>Bacteria</taxon>
        <taxon>Pseudomonadati</taxon>
        <taxon>Pseudomonadota</taxon>
        <taxon>Gammaproteobacteria</taxon>
        <taxon>Enterobacterales</taxon>
        <taxon>Bruguierivoracaceae</taxon>
        <taxon>Sodalis</taxon>
    </lineage>
</organism>
<dbReference type="EC" id="2.5.1.145" evidence="1"/>
<dbReference type="EMBL" id="AP008232">
    <property type="protein sequence ID" value="BAE75253.1"/>
    <property type="molecule type" value="Genomic_DNA"/>
</dbReference>
<dbReference type="RefSeq" id="WP_011411708.1">
    <property type="nucleotide sequence ID" value="NC_007712.1"/>
</dbReference>
<dbReference type="SMR" id="Q2NRH2"/>
<dbReference type="STRING" id="343509.SG1978"/>
<dbReference type="KEGG" id="sgl:SG1978"/>
<dbReference type="eggNOG" id="COG0682">
    <property type="taxonomic scope" value="Bacteria"/>
</dbReference>
<dbReference type="HOGENOM" id="CLU_013386_1_0_6"/>
<dbReference type="OrthoDB" id="871140at2"/>
<dbReference type="BioCyc" id="SGLO343509:SGP1_RS18160-MONOMER"/>
<dbReference type="UniPathway" id="UPA00664"/>
<dbReference type="Proteomes" id="UP000001932">
    <property type="component" value="Chromosome"/>
</dbReference>
<dbReference type="GO" id="GO:0005886">
    <property type="term" value="C:plasma membrane"/>
    <property type="evidence" value="ECO:0007669"/>
    <property type="project" value="UniProtKB-SubCell"/>
</dbReference>
<dbReference type="GO" id="GO:0008961">
    <property type="term" value="F:phosphatidylglycerol-prolipoprotein diacylglyceryl transferase activity"/>
    <property type="evidence" value="ECO:0007669"/>
    <property type="project" value="UniProtKB-UniRule"/>
</dbReference>
<dbReference type="GO" id="GO:0042158">
    <property type="term" value="P:lipoprotein biosynthetic process"/>
    <property type="evidence" value="ECO:0007669"/>
    <property type="project" value="UniProtKB-UniRule"/>
</dbReference>
<dbReference type="HAMAP" id="MF_01147">
    <property type="entry name" value="Lgt"/>
    <property type="match status" value="1"/>
</dbReference>
<dbReference type="InterPro" id="IPR001640">
    <property type="entry name" value="Lgt"/>
</dbReference>
<dbReference type="NCBIfam" id="TIGR00544">
    <property type="entry name" value="lgt"/>
    <property type="match status" value="1"/>
</dbReference>
<dbReference type="PANTHER" id="PTHR30589:SF0">
    <property type="entry name" value="PHOSPHATIDYLGLYCEROL--PROLIPOPROTEIN DIACYLGLYCERYL TRANSFERASE"/>
    <property type="match status" value="1"/>
</dbReference>
<dbReference type="PANTHER" id="PTHR30589">
    <property type="entry name" value="PROLIPOPROTEIN DIACYLGLYCERYL TRANSFERASE"/>
    <property type="match status" value="1"/>
</dbReference>
<dbReference type="Pfam" id="PF01790">
    <property type="entry name" value="LGT"/>
    <property type="match status" value="1"/>
</dbReference>
<dbReference type="PROSITE" id="PS01311">
    <property type="entry name" value="LGT"/>
    <property type="match status" value="1"/>
</dbReference>
<reference key="1">
    <citation type="journal article" date="2006" name="Genome Res.">
        <title>Massive genome erosion and functional adaptations provide insights into the symbiotic lifestyle of Sodalis glossinidius in the tsetse host.</title>
        <authorList>
            <person name="Toh H."/>
            <person name="Weiss B.L."/>
            <person name="Perkin S.A.H."/>
            <person name="Yamashita A."/>
            <person name="Oshima K."/>
            <person name="Hattori M."/>
            <person name="Aksoy S."/>
        </authorList>
    </citation>
    <scope>NUCLEOTIDE SEQUENCE [LARGE SCALE GENOMIC DNA]</scope>
    <source>
        <strain>morsitans</strain>
    </source>
</reference>
<protein>
    <recommendedName>
        <fullName evidence="1">Phosphatidylglycerol--prolipoprotein diacylglyceryl transferase</fullName>
        <ecNumber evidence="1">2.5.1.145</ecNumber>
    </recommendedName>
</protein>
<gene>
    <name evidence="1" type="primary">lgt</name>
    <name type="ordered locus">SG1978</name>
</gene>
<keyword id="KW-0997">Cell inner membrane</keyword>
<keyword id="KW-1003">Cell membrane</keyword>
<keyword id="KW-0472">Membrane</keyword>
<keyword id="KW-0808">Transferase</keyword>
<keyword id="KW-0812">Transmembrane</keyword>
<keyword id="KW-1133">Transmembrane helix</keyword>
<sequence length="290" mass="32994">MTTHYLAFPQFDPVIFSLGPVSLHWYGLMYLVGFVFAMWLAVRRANRPGSGWPKEEVENLLYAGFLGVFLGGRIGYVLFYNLPLFLDNPLYLFKVWDGGMSFHGGLIGVIVVMLWFAHRTRRHFFQVADFVAPMVPFGLGAGRLGNFINGELWGRVTTDTPWAMLFPCSRQEDIALLPANPQWQALFERYGVLPRHPSQLYEMLLEGVVLFIILNLFIRKPRPIGSVSGLFLICYGAFRILVEFFRQPDAQLGLFSGVISMGQILSLPMILAGVIMMAWAYRRHPQQHLS</sequence>
<accession>Q2NRH2</accession>
<proteinExistence type="inferred from homology"/>